<reference key="1">
    <citation type="journal article" date="1989" name="Proc. Natl. Acad. Sci. U.S.A.">
        <title>MSI1, a negative regulator of the RAS-cAMP pathway in Saccharomyces cerevisiae.</title>
        <authorList>
            <person name="Ruggieri R."/>
            <person name="Tanaka K."/>
            <person name="Nakafuku M."/>
            <person name="Kaziro Y."/>
            <person name="Toh-e A."/>
            <person name="Matsumoto K."/>
        </authorList>
    </citation>
    <scope>NUCLEOTIDE SEQUENCE [GENOMIC DNA]</scope>
</reference>
<reference key="2">
    <citation type="journal article" date="1993" name="Yeast">
        <title>RIM2, MSI1 and PGI1 are located within an 8 kb segment of Saccharomyces cerevisiae chromosome II, which also contains the putative ribosomal gene L21 and a new putative essential gene with a leucine zipper motif.</title>
        <authorList>
            <person name="Demolis N."/>
            <person name="Mallet L."/>
            <person name="Bussereau F."/>
            <person name="Jacquet M."/>
        </authorList>
    </citation>
    <scope>NUCLEOTIDE SEQUENCE [GENOMIC DNA]</scope>
    <source>
        <strain>ATCC 204508 / S288c</strain>
    </source>
</reference>
<reference key="3">
    <citation type="journal article" date="1994" name="EMBO J.">
        <title>Complete DNA sequence of yeast chromosome II.</title>
        <authorList>
            <person name="Feldmann H."/>
            <person name="Aigle M."/>
            <person name="Aljinovic G."/>
            <person name="Andre B."/>
            <person name="Baclet M.C."/>
            <person name="Barthe C."/>
            <person name="Baur A."/>
            <person name="Becam A.-M."/>
            <person name="Biteau N."/>
            <person name="Boles E."/>
            <person name="Brandt T."/>
            <person name="Brendel M."/>
            <person name="Brueckner M."/>
            <person name="Bussereau F."/>
            <person name="Christiansen C."/>
            <person name="Contreras R."/>
            <person name="Crouzet M."/>
            <person name="Cziepluch C."/>
            <person name="Demolis N."/>
            <person name="Delaveau T."/>
            <person name="Doignon F."/>
            <person name="Domdey H."/>
            <person name="Duesterhus S."/>
            <person name="Dubois E."/>
            <person name="Dujon B."/>
            <person name="El Bakkoury M."/>
            <person name="Entian K.-D."/>
            <person name="Feuermann M."/>
            <person name="Fiers W."/>
            <person name="Fobo G.M."/>
            <person name="Fritz C."/>
            <person name="Gassenhuber J."/>
            <person name="Glansdorff N."/>
            <person name="Goffeau A."/>
            <person name="Grivell L.A."/>
            <person name="de Haan M."/>
            <person name="Hein C."/>
            <person name="Herbert C.J."/>
            <person name="Hollenberg C.P."/>
            <person name="Holmstroem K."/>
            <person name="Jacq C."/>
            <person name="Jacquet M."/>
            <person name="Jauniaux J.-C."/>
            <person name="Jonniaux J.-L."/>
            <person name="Kallesoee T."/>
            <person name="Kiesau P."/>
            <person name="Kirchrath L."/>
            <person name="Koetter P."/>
            <person name="Korol S."/>
            <person name="Liebl S."/>
            <person name="Logghe M."/>
            <person name="Lohan A.J.E."/>
            <person name="Louis E.J."/>
            <person name="Li Z.Y."/>
            <person name="Maat M.J."/>
            <person name="Mallet L."/>
            <person name="Mannhaupt G."/>
            <person name="Messenguy F."/>
            <person name="Miosga T."/>
            <person name="Molemans F."/>
            <person name="Mueller S."/>
            <person name="Nasr F."/>
            <person name="Obermaier B."/>
            <person name="Perea J."/>
            <person name="Pierard A."/>
            <person name="Piravandi E."/>
            <person name="Pohl F.M."/>
            <person name="Pohl T.M."/>
            <person name="Potier S."/>
            <person name="Proft M."/>
            <person name="Purnelle B."/>
            <person name="Ramezani Rad M."/>
            <person name="Rieger M."/>
            <person name="Rose M."/>
            <person name="Schaaff-Gerstenschlaeger I."/>
            <person name="Scherens B."/>
            <person name="Schwarzlose C."/>
            <person name="Skala J."/>
            <person name="Slonimski P.P."/>
            <person name="Smits P.H.M."/>
            <person name="Souciet J.-L."/>
            <person name="Steensma H.Y."/>
            <person name="Stucka R."/>
            <person name="Urrestarazu L.A."/>
            <person name="van der Aart Q.J.M."/>
            <person name="Van Dyck L."/>
            <person name="Vassarotti A."/>
            <person name="Vetter I."/>
            <person name="Vierendeels F."/>
            <person name="Vissers S."/>
            <person name="Wagner G."/>
            <person name="de Wergifosse P."/>
            <person name="Wolfe K.H."/>
            <person name="Zagulski M."/>
            <person name="Zimmermann F.K."/>
            <person name="Mewes H.-W."/>
            <person name="Kleine K."/>
        </authorList>
    </citation>
    <scope>NUCLEOTIDE SEQUENCE [LARGE SCALE GENOMIC DNA]</scope>
    <source>
        <strain>ATCC 204508 / S288c</strain>
    </source>
</reference>
<reference key="4">
    <citation type="journal article" date="2014" name="G3 (Bethesda)">
        <title>The reference genome sequence of Saccharomyces cerevisiae: Then and now.</title>
        <authorList>
            <person name="Engel S.R."/>
            <person name="Dietrich F.S."/>
            <person name="Fisk D.G."/>
            <person name="Binkley G."/>
            <person name="Balakrishnan R."/>
            <person name="Costanzo M.C."/>
            <person name="Dwight S.S."/>
            <person name="Hitz B.C."/>
            <person name="Karra K."/>
            <person name="Nash R.S."/>
            <person name="Weng S."/>
            <person name="Wong E.D."/>
            <person name="Lloyd P."/>
            <person name="Skrzypek M.S."/>
            <person name="Miyasato S.R."/>
            <person name="Simison M."/>
            <person name="Cherry J.M."/>
        </authorList>
    </citation>
    <scope>GENOME REANNOTATION</scope>
    <source>
        <strain>ATCC 204508 / S288c</strain>
    </source>
</reference>
<reference key="5">
    <citation type="journal article" date="2007" name="Genome Res.">
        <title>Approaching a complete repository of sequence-verified protein-encoding clones for Saccharomyces cerevisiae.</title>
        <authorList>
            <person name="Hu Y."/>
            <person name="Rolfs A."/>
            <person name="Bhullar B."/>
            <person name="Murthy T.V.S."/>
            <person name="Zhu C."/>
            <person name="Berger M.F."/>
            <person name="Camargo A.A."/>
            <person name="Kelley F."/>
            <person name="McCarron S."/>
            <person name="Jepson D."/>
            <person name="Richardson A."/>
            <person name="Raphael J."/>
            <person name="Moreira D."/>
            <person name="Taycher E."/>
            <person name="Zuo D."/>
            <person name="Mohr S."/>
            <person name="Kane M.F."/>
            <person name="Williamson J."/>
            <person name="Simpson A.J.G."/>
            <person name="Bulyk M.L."/>
            <person name="Harlow E."/>
            <person name="Marsischky G."/>
            <person name="Kolodner R.D."/>
            <person name="LaBaer J."/>
        </authorList>
    </citation>
    <scope>NUCLEOTIDE SEQUENCE [GENOMIC DNA]</scope>
    <source>
        <strain>ATCC 204508 / S288c</strain>
    </source>
</reference>
<reference key="6">
    <citation type="journal article" date="1997" name="Genes Dev.">
        <title>Ultraviolet radiation sensitivity and reduction of telomeric silencing in Saccharomyces cerevisiae cells lacking chromatin assembly factor-I.</title>
        <authorList>
            <person name="Kaufman P.D."/>
            <person name="Kobayashi R."/>
            <person name="Stillman B."/>
        </authorList>
    </citation>
    <scope>PROTEIN SEQUENCE OF 7-27; 32-43 AND 414-422</scope>
    <scope>FUNCTION</scope>
</reference>
<reference key="7">
    <citation type="journal article" date="2001" name="Mol. Cell. Biol.">
        <title>CAC3(MSI1) suppression of RAS2(G19V) is independent of chromatin assembly factor I and mediated by NPR1.</title>
        <authorList>
            <person name="Johnston S.D."/>
            <person name="Enomoto S."/>
            <person name="Schneper L."/>
            <person name="McClellan M.C."/>
            <person name="Twu F."/>
            <person name="Montgomery N.D."/>
            <person name="Haney S.A."/>
            <person name="Broach J.R."/>
            <person name="Berman J."/>
        </authorList>
    </citation>
    <scope>FUNCTION</scope>
    <scope>INTERACTION WITH NPR1</scope>
    <scope>SUBCELLULAR LOCATION</scope>
</reference>
<reference key="8">
    <citation type="journal article" date="2003" name="Nature">
        <title>Global analysis of protein expression in yeast.</title>
        <authorList>
            <person name="Ghaemmaghami S."/>
            <person name="Huh W.-K."/>
            <person name="Bower K."/>
            <person name="Howson R.W."/>
            <person name="Belle A."/>
            <person name="Dephoure N."/>
            <person name="O'Shea E.K."/>
            <person name="Weissman J.S."/>
        </authorList>
    </citation>
    <scope>LEVEL OF PROTEIN EXPRESSION [LARGE SCALE ANALYSIS]</scope>
</reference>
<reference key="9">
    <citation type="journal article" date="2008" name="Mol. Cell. Proteomics">
        <title>A multidimensional chromatography technology for in-depth phosphoproteome analysis.</title>
        <authorList>
            <person name="Albuquerque C.P."/>
            <person name="Smolka M.B."/>
            <person name="Payne S.H."/>
            <person name="Bafna V."/>
            <person name="Eng J."/>
            <person name="Zhou H."/>
        </authorList>
    </citation>
    <scope>IDENTIFICATION BY MASS SPECTROMETRY [LARGE SCALE ANALYSIS]</scope>
</reference>
<reference key="10">
    <citation type="journal article" date="2009" name="Mol. Cell">
        <title>Two-color cell array screen reveals interdependent roles for histone chaperones and a chromatin boundary regulator in histone gene repression.</title>
        <authorList>
            <person name="Fillingham J."/>
            <person name="Kainth P."/>
            <person name="Lambert J.P."/>
            <person name="van Bakel H."/>
            <person name="Tsui K."/>
            <person name="Pena-Castillo L."/>
            <person name="Nislow C."/>
            <person name="Figeys D."/>
            <person name="Hughes T.R."/>
            <person name="Greenblatt J."/>
            <person name="Andrews B.J."/>
        </authorList>
    </citation>
    <scope>INTERACTION WITH RTT106</scope>
</reference>
<evidence type="ECO:0000250" key="1">
    <source>
        <dbReference type="UniProtKB" id="Q9Y825"/>
    </source>
</evidence>
<evidence type="ECO:0000269" key="2">
    <source>
    </source>
</evidence>
<evidence type="ECO:0000269" key="3">
    <source>
    </source>
</evidence>
<evidence type="ECO:0000269" key="4">
    <source>
    </source>
</evidence>
<evidence type="ECO:0000269" key="5">
    <source>
    </source>
</evidence>
<evidence type="ECO:0000305" key="6"/>
<organism>
    <name type="scientific">Saccharomyces cerevisiae (strain ATCC 204508 / S288c)</name>
    <name type="common">Baker's yeast</name>
    <dbReference type="NCBI Taxonomy" id="559292"/>
    <lineage>
        <taxon>Eukaryota</taxon>
        <taxon>Fungi</taxon>
        <taxon>Dikarya</taxon>
        <taxon>Ascomycota</taxon>
        <taxon>Saccharomycotina</taxon>
        <taxon>Saccharomycetes</taxon>
        <taxon>Saccharomycetales</taxon>
        <taxon>Saccharomycetaceae</taxon>
        <taxon>Saccharomyces</taxon>
    </lineage>
</organism>
<protein>
    <recommendedName>
        <fullName evidence="6">Histone-binding protein MSI1</fullName>
    </recommendedName>
    <alternativeName>
        <fullName evidence="6">Chromatin assembly factor 1 subunit C</fullName>
        <shortName evidence="6">CAF-1 subunit C</shortName>
    </alternativeName>
    <alternativeName>
        <fullName evidence="6">Chromatin assembly factor 1 subunit p50</fullName>
        <shortName evidence="6">CAF-1 p50 subunit</shortName>
    </alternativeName>
    <alternativeName>
        <fullName>IRA1 multicopy suppressor</fullName>
    </alternativeName>
</protein>
<comment type="function">
    <text evidence="1 2 5">Acts as a component of the histone chaperone complex chromatin assembly factor 1 (CAF-1), which assembles histone octamers onto DNA during replication and repair (PubMed:9030687). CAF-1 performs the first step of the nucleosome assembly process, bringing newly synthesized histones H3 and H4 to replicating DNA; histones H2A/H2B can bind to this chromatin precursor subsequent to DNA replication to complete the histone octamer (By similarity). Plays a role in the maintenance of heterochromatin (By similarity). Independently, MSI1 is involved in regulation of the RAS/cAMP pathway via sequestration of NPR1 (PubMed:11238915).</text>
</comment>
<comment type="subunit">
    <text evidence="2 4">Component of chromatin assembly factor 1 (CAF-1), composed of MSI1/p50, CAC2/p60 and CAC1/p90 (PubMed:11238915). Interacts with protein kinase NPR1 (PubMed:11238915). Interacts with RTT106 (PubMed:19683497).</text>
</comment>
<comment type="interaction">
    <interactant intactId="EBI-11391">
        <id>P13712</id>
    </interactant>
    <interactant intactId="EBI-3920">
        <id>Q04199</id>
        <label>CAC2</label>
    </interactant>
    <organismsDiffer>false</organismsDiffer>
    <experiments>4</experiments>
</comment>
<comment type="interaction">
    <interactant intactId="EBI-11391">
        <id>P13712</id>
    </interactant>
    <interactant intactId="EBI-3913">
        <id>Q12495</id>
        <label>RLF2</label>
    </interactant>
    <organismsDiffer>false</organismsDiffer>
    <experiments>6</experiments>
</comment>
<comment type="subcellular location">
    <subcellularLocation>
        <location evidence="2">Cytoplasm</location>
    </subcellularLocation>
    <subcellularLocation>
        <location evidence="2">Nucleus</location>
    </subcellularLocation>
</comment>
<comment type="miscellaneous">
    <text evidence="3">Present with 149 molecules/cell in log phase SD medium.</text>
</comment>
<comment type="similarity">
    <text evidence="6">Belongs to the WD repeat RBAP46/RBAP48/MSI1 family.</text>
</comment>
<dbReference type="EMBL" id="M27300">
    <property type="protein sequence ID" value="AAA34804.1"/>
    <property type="molecule type" value="Genomic_DNA"/>
</dbReference>
<dbReference type="EMBL" id="Z21487">
    <property type="protein sequence ID" value="CAA79682.1"/>
    <property type="molecule type" value="Genomic_DNA"/>
</dbReference>
<dbReference type="EMBL" id="Z36064">
    <property type="protein sequence ID" value="CAA85157.1"/>
    <property type="molecule type" value="Genomic_DNA"/>
</dbReference>
<dbReference type="EMBL" id="AY692834">
    <property type="protein sequence ID" value="AAT92853.1"/>
    <property type="molecule type" value="Genomic_DNA"/>
</dbReference>
<dbReference type="EMBL" id="BK006936">
    <property type="protein sequence ID" value="DAA07309.1"/>
    <property type="molecule type" value="Genomic_DNA"/>
</dbReference>
<dbReference type="PIR" id="S07865">
    <property type="entry name" value="BVBYMS"/>
</dbReference>
<dbReference type="RefSeq" id="NP_009754.1">
    <property type="nucleotide sequence ID" value="NM_001178543.1"/>
</dbReference>
<dbReference type="SMR" id="P13712"/>
<dbReference type="BioGRID" id="32892">
    <property type="interactions" value="167"/>
</dbReference>
<dbReference type="ComplexPortal" id="CPX-568">
    <property type="entry name" value="Chromatin assembly factor 1 complex"/>
</dbReference>
<dbReference type="DIP" id="DIP-338N"/>
<dbReference type="FunCoup" id="P13712">
    <property type="interactions" value="116"/>
</dbReference>
<dbReference type="IntAct" id="P13712">
    <property type="interactions" value="17"/>
</dbReference>
<dbReference type="MINT" id="P13712"/>
<dbReference type="STRING" id="4932.YBR195C"/>
<dbReference type="iPTMnet" id="P13712"/>
<dbReference type="PaxDb" id="4932-YBR195C"/>
<dbReference type="PeptideAtlas" id="P13712"/>
<dbReference type="EnsemblFungi" id="YBR195C_mRNA">
    <property type="protein sequence ID" value="YBR195C"/>
    <property type="gene ID" value="YBR195C"/>
</dbReference>
<dbReference type="GeneID" id="852494"/>
<dbReference type="KEGG" id="sce:YBR195C"/>
<dbReference type="AGR" id="SGD:S000000399"/>
<dbReference type="SGD" id="S000000399">
    <property type="gene designation" value="MSI1"/>
</dbReference>
<dbReference type="VEuPathDB" id="FungiDB:YBR195C"/>
<dbReference type="eggNOG" id="KOG0264">
    <property type="taxonomic scope" value="Eukaryota"/>
</dbReference>
<dbReference type="GeneTree" id="ENSGT00940000168296"/>
<dbReference type="HOGENOM" id="CLU_020445_3_1_1"/>
<dbReference type="InParanoid" id="P13712"/>
<dbReference type="OMA" id="MPQNPDV"/>
<dbReference type="OrthoDB" id="427795at2759"/>
<dbReference type="BioCyc" id="YEAST:G3O-29137-MONOMER"/>
<dbReference type="Reactome" id="R-SCE-3214815">
    <property type="pathway name" value="HDACs deacetylate histones"/>
</dbReference>
<dbReference type="BioGRID-ORCS" id="852494">
    <property type="hits" value="0 hits in 10 CRISPR screens"/>
</dbReference>
<dbReference type="PRO" id="PR:P13712"/>
<dbReference type="Proteomes" id="UP000002311">
    <property type="component" value="Chromosome II"/>
</dbReference>
<dbReference type="RNAct" id="P13712">
    <property type="molecule type" value="protein"/>
</dbReference>
<dbReference type="GO" id="GO:0033186">
    <property type="term" value="C:CAF-1 complex"/>
    <property type="evidence" value="ECO:0000314"/>
    <property type="project" value="SGD"/>
</dbReference>
<dbReference type="GO" id="GO:0005737">
    <property type="term" value="C:cytoplasm"/>
    <property type="evidence" value="ECO:0000314"/>
    <property type="project" value="SGD"/>
</dbReference>
<dbReference type="GO" id="GO:0000786">
    <property type="term" value="C:nucleosome"/>
    <property type="evidence" value="ECO:0000314"/>
    <property type="project" value="ComplexPortal"/>
</dbReference>
<dbReference type="GO" id="GO:0005634">
    <property type="term" value="C:nucleus"/>
    <property type="evidence" value="ECO:0000314"/>
    <property type="project" value="SGD"/>
</dbReference>
<dbReference type="GO" id="GO:0033698">
    <property type="term" value="C:Rpd3L complex"/>
    <property type="evidence" value="ECO:0000318"/>
    <property type="project" value="GO_Central"/>
</dbReference>
<dbReference type="GO" id="GO:0070210">
    <property type="term" value="C:Rpd3L-Expanded complex"/>
    <property type="evidence" value="ECO:0000318"/>
    <property type="project" value="GO_Central"/>
</dbReference>
<dbReference type="GO" id="GO:0006325">
    <property type="term" value="P:chromatin organization"/>
    <property type="evidence" value="ECO:0000314"/>
    <property type="project" value="ComplexPortal"/>
</dbReference>
<dbReference type="GO" id="GO:0006338">
    <property type="term" value="P:chromatin remodeling"/>
    <property type="evidence" value="ECO:0000318"/>
    <property type="project" value="GO_Central"/>
</dbReference>
<dbReference type="GO" id="GO:0006281">
    <property type="term" value="P:DNA repair"/>
    <property type="evidence" value="ECO:0000303"/>
    <property type="project" value="ComplexPortal"/>
</dbReference>
<dbReference type="GO" id="GO:0006260">
    <property type="term" value="P:DNA replication"/>
    <property type="evidence" value="ECO:0000303"/>
    <property type="project" value="ComplexPortal"/>
</dbReference>
<dbReference type="GO" id="GO:0006335">
    <property type="term" value="P:DNA replication-dependent chromatin assembly"/>
    <property type="evidence" value="ECO:0000314"/>
    <property type="project" value="ComplexPortal"/>
</dbReference>
<dbReference type="GO" id="GO:0006355">
    <property type="term" value="P:regulation of DNA-templated transcription"/>
    <property type="evidence" value="ECO:0000318"/>
    <property type="project" value="GO_Central"/>
</dbReference>
<dbReference type="FunFam" id="2.130.10.10:FF:001170">
    <property type="entry name" value="Chromatin assembly factor-I p50 subunit"/>
    <property type="match status" value="1"/>
</dbReference>
<dbReference type="Gene3D" id="2.130.10.10">
    <property type="entry name" value="YVTN repeat-like/Quinoprotein amine dehydrogenase"/>
    <property type="match status" value="1"/>
</dbReference>
<dbReference type="InterPro" id="IPR022052">
    <property type="entry name" value="Histone-bd_RBBP4-like_N"/>
</dbReference>
<dbReference type="InterPro" id="IPR013979">
    <property type="entry name" value="TIF_beta_prop-like"/>
</dbReference>
<dbReference type="InterPro" id="IPR015943">
    <property type="entry name" value="WD40/YVTN_repeat-like_dom_sf"/>
</dbReference>
<dbReference type="InterPro" id="IPR019775">
    <property type="entry name" value="WD40_repeat_CS"/>
</dbReference>
<dbReference type="InterPro" id="IPR036322">
    <property type="entry name" value="WD40_repeat_dom_sf"/>
</dbReference>
<dbReference type="InterPro" id="IPR001680">
    <property type="entry name" value="WD40_rpt"/>
</dbReference>
<dbReference type="InterPro" id="IPR050459">
    <property type="entry name" value="WD_repeat_RBAP46/RBAP48/MSI1"/>
</dbReference>
<dbReference type="PANTHER" id="PTHR22850">
    <property type="entry name" value="WD40 REPEAT FAMILY"/>
    <property type="match status" value="1"/>
</dbReference>
<dbReference type="Pfam" id="PF12265">
    <property type="entry name" value="CAF1C_H4-bd"/>
    <property type="match status" value="1"/>
</dbReference>
<dbReference type="Pfam" id="PF08662">
    <property type="entry name" value="eIF2A"/>
    <property type="match status" value="1"/>
</dbReference>
<dbReference type="Pfam" id="PF00400">
    <property type="entry name" value="WD40"/>
    <property type="match status" value="1"/>
</dbReference>
<dbReference type="SMART" id="SM00320">
    <property type="entry name" value="WD40"/>
    <property type="match status" value="6"/>
</dbReference>
<dbReference type="SUPFAM" id="SSF50978">
    <property type="entry name" value="WD40 repeat-like"/>
    <property type="match status" value="1"/>
</dbReference>
<dbReference type="PROSITE" id="PS00678">
    <property type="entry name" value="WD_REPEATS_1"/>
    <property type="match status" value="3"/>
</dbReference>
<dbReference type="PROSITE" id="PS50082">
    <property type="entry name" value="WD_REPEATS_2"/>
    <property type="match status" value="2"/>
</dbReference>
<dbReference type="PROSITE" id="PS50294">
    <property type="entry name" value="WD_REPEATS_REGION"/>
    <property type="match status" value="1"/>
</dbReference>
<sequence length="422" mass="47365">MNQCAKDITHEASSIPIDLQERYSHWKKNTKLLYDYLNTNSTKWPSLTCQFFPDLDTTSDEHRILLSSFTSSQKPEDETIYISKISTLGHIKWSSLNNFDMDEMEFKPENSTRFPSKHLVNDISIFFPNGECNRARYLPQNPDIIAGASSDGAIYIFDRTKHGSTRIRQSKISHPFETKLFGSHGVIQDVEAMDTSSADINEATSLAWNLQQEALLLSSHSNGQVQVWDIKQYSHENPIIDLPLVSINSDGTAVNDVTWMPTHDSLFAACTEGNAVSLLDLRTKKEKLQSNREKHDGGVNSCRFNYKNSLILASADSNGRLNLWDIRNMNKSPIATMEHGTSVSTLEWSPNFDTVLATAGQEDGLVKLWDTSCEETIFTHGGHMLGVNDISWDAHDPWLMCSVANDNSVHIWKPAGNLVGHS</sequence>
<keyword id="KW-0114">cAMP</keyword>
<keyword id="KW-0143">Chaperone</keyword>
<keyword id="KW-0156">Chromatin regulator</keyword>
<keyword id="KW-0963">Cytoplasm</keyword>
<keyword id="KW-0903">Direct protein sequencing</keyword>
<keyword id="KW-0227">DNA damage</keyword>
<keyword id="KW-0234">DNA repair</keyword>
<keyword id="KW-0235">DNA replication</keyword>
<keyword id="KW-0539">Nucleus</keyword>
<keyword id="KW-1185">Reference proteome</keyword>
<keyword id="KW-0677">Repeat</keyword>
<keyword id="KW-0853">WD repeat</keyword>
<accession>P13712</accession>
<accession>D6VQI9</accession>
<proteinExistence type="evidence at protein level"/>
<gene>
    <name type="primary">MSI1</name>
    <name type="synonym">CAC3</name>
    <name type="ordered locus">YBR195C</name>
    <name type="ORF">YBR1405</name>
</gene>
<name>MSI1_YEAST</name>
<feature type="chain" id="PRO_0000051086" description="Histone-binding protein MSI1">
    <location>
        <begin position="1"/>
        <end position="422"/>
    </location>
</feature>
<feature type="repeat" description="WD 1">
    <location>
        <begin position="127"/>
        <end position="158"/>
    </location>
</feature>
<feature type="repeat" description="WD 2">
    <location>
        <begin position="198"/>
        <end position="238"/>
    </location>
</feature>
<feature type="repeat" description="WD 3">
    <location>
        <begin position="249"/>
        <end position="289"/>
    </location>
</feature>
<feature type="repeat" description="WD 4">
    <location>
        <begin position="294"/>
        <end position="334"/>
    </location>
</feature>
<feature type="repeat" description="WD 5">
    <location>
        <begin position="338"/>
        <end position="379"/>
    </location>
</feature>
<feature type="repeat" description="WD 6">
    <location>
        <begin position="382"/>
        <end position="421"/>
    </location>
</feature>